<evidence type="ECO:0000250" key="1">
    <source>
        <dbReference type="UniProtKB" id="A0A2I4HXH5"/>
    </source>
</evidence>
<evidence type="ECO:0000250" key="2">
    <source>
        <dbReference type="UniProtKB" id="P21589"/>
    </source>
</evidence>
<evidence type="ECO:0000250" key="3">
    <source>
        <dbReference type="UniProtKB" id="W8EFS0"/>
    </source>
</evidence>
<evidence type="ECO:0000255" key="4"/>
<evidence type="ECO:0000269" key="5">
    <source>
    </source>
</evidence>
<evidence type="ECO:0000303" key="6">
    <source>
    </source>
</evidence>
<evidence type="ECO:0000305" key="7"/>
<evidence type="ECO:0000305" key="8">
    <source>
    </source>
</evidence>
<evidence type="ECO:0000305" key="9">
    <source>
    </source>
</evidence>
<comment type="function">
    <text evidence="5 9">Hydrolyzes nucleotides into nucleosides (PubMed:18384831). Snake venom 5'-nucleotidases are widely distributed among venomous snake taxa, but there is a lack of information about their biological activities. They have been shown to inhibit platelet aggregation. This effect may be due to the liberation of inhibitory AMP or adenosine by its action on ADP released upon initiation of aggregation. Venom 5'-nucleotidases are also known to synergistically act in vivo with other toxins like ADPases, phospholipases, and disintegrins to exert a more pronounced anti-coagulant effect.</text>
</comment>
<comment type="catalytic activity">
    <reaction evidence="5">
        <text>a ribonucleoside 5'-phosphate + H2O = a ribonucleoside + phosphate</text>
        <dbReference type="Rhea" id="RHEA:12484"/>
        <dbReference type="ChEBI" id="CHEBI:15377"/>
        <dbReference type="ChEBI" id="CHEBI:18254"/>
        <dbReference type="ChEBI" id="CHEBI:43474"/>
        <dbReference type="ChEBI" id="CHEBI:58043"/>
        <dbReference type="EC" id="3.1.3.5"/>
    </reaction>
</comment>
<comment type="cofactor">
    <cofactor evidence="2">
        <name>Zn(2+)</name>
        <dbReference type="ChEBI" id="CHEBI:29105"/>
    </cofactor>
</comment>
<comment type="subcellular location">
    <subcellularLocation>
        <location evidence="5">Membrane</location>
        <topology evidence="2">Lipid-anchor</topology>
        <topology evidence="2">GPI-anchor</topology>
    </subcellularLocation>
</comment>
<comment type="tissue specificity">
    <text evidence="8">Expressed by the venom gland.</text>
</comment>
<comment type="PTM">
    <text>Venom 5'-nucleotidases (or a part thereof) may be released into the venom via exosome-like vesicles. They may be attached via a GPI anchor to the membrane of these vesicles. Soluble forms of 5'-nucleotidase might be released by cleavage of the ectodomain in the exosome-like vesicles or venom gland cells.</text>
</comment>
<comment type="similarity">
    <text evidence="7">Belongs to the 5'-nucleotidase family.</text>
</comment>
<feature type="chain" id="PRO_0000418207" description="Snake venom 5'-nucleotidase" evidence="8">
    <location>
        <begin position="1" status="less than"/>
        <end position="54" status="greater than"/>
    </location>
</feature>
<feature type="binding site" evidence="1">
    <location>
        <position position="11"/>
    </location>
    <ligand>
        <name>Zn(2+)</name>
        <dbReference type="ChEBI" id="CHEBI:29105"/>
        <label>1</label>
    </ligand>
</feature>
<feature type="binding site" evidence="1">
    <location>
        <position position="13"/>
    </location>
    <ligand>
        <name>Zn(2+)</name>
        <dbReference type="ChEBI" id="CHEBI:29105"/>
        <label>1</label>
    </ligand>
</feature>
<feature type="glycosylation site" description="N-linked (GlcNAc...) asparagine" evidence="4">
    <location>
        <position position="46"/>
    </location>
</feature>
<feature type="non-consecutive residues" evidence="8">
    <location>
        <begin position="17"/>
        <end position="18"/>
    </location>
</feature>
<feature type="non-consecutive residues" evidence="8">
    <location>
        <begin position="25"/>
        <end position="26"/>
    </location>
</feature>
<feature type="non-consecutive residues" evidence="8">
    <location>
        <begin position="41"/>
        <end position="42"/>
    </location>
</feature>
<feature type="non-terminal residue" evidence="8">
    <location>
        <position position="1"/>
    </location>
</feature>
<feature type="non-terminal residue" evidence="8">
    <location>
        <position position="54"/>
    </location>
</feature>
<protein>
    <recommendedName>
        <fullName evidence="3">Snake venom 5'-nucleotidase</fullName>
        <shortName evidence="3">5'-NT</shortName>
        <ecNumber evidence="5">3.1.3.5</ecNumber>
    </recommendedName>
    <alternativeName>
        <fullName evidence="6">Ecto-5'-nucleotidase</fullName>
    </alternativeName>
</protein>
<accession>P0DJJ5</accession>
<organism>
    <name type="scientific">Gloydius blomhoffii blomhoffii</name>
    <name type="common">Japanese mamushi</name>
    <name type="synonym">Agkistrodon blomhoffii blomhoffii</name>
    <dbReference type="NCBI Taxonomy" id="417378"/>
    <lineage>
        <taxon>Eukaryota</taxon>
        <taxon>Metazoa</taxon>
        <taxon>Chordata</taxon>
        <taxon>Craniata</taxon>
        <taxon>Vertebrata</taxon>
        <taxon>Euteleostomi</taxon>
        <taxon>Lepidosauria</taxon>
        <taxon>Squamata</taxon>
        <taxon>Bifurcata</taxon>
        <taxon>Unidentata</taxon>
        <taxon>Episquamata</taxon>
        <taxon>Toxicofera</taxon>
        <taxon>Serpentes</taxon>
        <taxon>Colubroidea</taxon>
        <taxon>Viperidae</taxon>
        <taxon>Crotalinae</taxon>
        <taxon>Gloydius</taxon>
    </lineage>
</organism>
<proteinExistence type="evidence at protein level"/>
<keyword id="KW-0903">Direct protein sequencing</keyword>
<keyword id="KW-0325">Glycoprotein</keyword>
<keyword id="KW-0336">GPI-anchor</keyword>
<keyword id="KW-0378">Hydrolase</keyword>
<keyword id="KW-0449">Lipoprotein</keyword>
<keyword id="KW-0472">Membrane</keyword>
<keyword id="KW-0479">Metal-binding</keyword>
<keyword id="KW-0547">Nucleotide-binding</keyword>
<keyword id="KW-0862">Zinc</keyword>
<reference key="1">
    <citation type="journal article" date="2008" name="Toxicon">
        <title>Exosome-like vesicles in Gloydius blomhoffii blomhoffii venom.</title>
        <authorList>
            <person name="Ogawa Y."/>
            <person name="Kanai-Azuma M."/>
            <person name="Akimoto Y."/>
            <person name="Kawakami H."/>
            <person name="Yanoshita R."/>
        </authorList>
    </citation>
    <scope>PROTEIN SEQUENCE</scope>
    <scope>FUNCTION</scope>
    <scope>CATALYTIC ACTIVITY</scope>
    <scope>SUBCELLULAR LOCATION</scope>
    <scope>SUBUNIT</scope>
    <source>
        <tissue>Venom</tissue>
    </source>
</reference>
<reference key="2">
    <citation type="journal article" date="2010" name="Cell Biochem. Funct.">
        <title>The pharmacological role of nucleotidases in snake venoms.</title>
        <authorList>
            <person name="Dhananjaya B.L."/>
            <person name="D'Souza C.J."/>
        </authorList>
    </citation>
    <scope>REVIEW</scope>
</reference>
<sequence length="54" mass="6012">SFELTILHTNDVHARVEIINVGSEKSDDGRQVPVVQAYAFGIQLHNYSSQEIGK</sequence>
<name>V5NTD_GLOBB</name>
<dbReference type="EC" id="3.1.3.5" evidence="5"/>
<dbReference type="GO" id="GO:0098552">
    <property type="term" value="C:side of membrane"/>
    <property type="evidence" value="ECO:0007669"/>
    <property type="project" value="UniProtKB-KW"/>
</dbReference>
<dbReference type="GO" id="GO:0008253">
    <property type="term" value="F:5'-nucleotidase activity"/>
    <property type="evidence" value="ECO:0007669"/>
    <property type="project" value="UniProtKB-EC"/>
</dbReference>
<dbReference type="GO" id="GO:0046872">
    <property type="term" value="F:metal ion binding"/>
    <property type="evidence" value="ECO:0007669"/>
    <property type="project" value="UniProtKB-KW"/>
</dbReference>
<dbReference type="GO" id="GO:0000166">
    <property type="term" value="F:nucleotide binding"/>
    <property type="evidence" value="ECO:0007669"/>
    <property type="project" value="UniProtKB-KW"/>
</dbReference>
<dbReference type="InterPro" id="IPR006146">
    <property type="entry name" value="5'-Nucleotdase_CS"/>
</dbReference>
<dbReference type="PROSITE" id="PS00785">
    <property type="entry name" value="5_NUCLEOTIDASE_1"/>
    <property type="match status" value="1"/>
</dbReference>